<feature type="chain" id="PRO_1000200371" description="tRNA uridine(34) hydroxylase">
    <location>
        <begin position="1"/>
        <end position="350"/>
    </location>
</feature>
<feature type="domain" description="Rhodanese" evidence="1">
    <location>
        <begin position="146"/>
        <end position="240"/>
    </location>
</feature>
<feature type="region of interest" description="Disordered" evidence="2">
    <location>
        <begin position="319"/>
        <end position="350"/>
    </location>
</feature>
<feature type="compositionally biased region" description="Basic and acidic residues" evidence="2">
    <location>
        <begin position="319"/>
        <end position="328"/>
    </location>
</feature>
<feature type="active site" description="Cysteine persulfide intermediate" evidence="1">
    <location>
        <position position="200"/>
    </location>
</feature>
<proteinExistence type="inferred from homology"/>
<gene>
    <name evidence="1" type="primary">trhO</name>
    <name type="synonym">yceA</name>
    <name type="ordered locus">SeAg_B2033</name>
</gene>
<reference key="1">
    <citation type="journal article" date="2011" name="J. Bacteriol.">
        <title>Comparative genomics of 28 Salmonella enterica isolates: evidence for CRISPR-mediated adaptive sublineage evolution.</title>
        <authorList>
            <person name="Fricke W.F."/>
            <person name="Mammel M.K."/>
            <person name="McDermott P.F."/>
            <person name="Tartera C."/>
            <person name="White D.G."/>
            <person name="Leclerc J.E."/>
            <person name="Ravel J."/>
            <person name="Cebula T.A."/>
        </authorList>
    </citation>
    <scope>NUCLEOTIDE SEQUENCE [LARGE SCALE GENOMIC DNA]</scope>
    <source>
        <strain>SL483</strain>
    </source>
</reference>
<keyword id="KW-0560">Oxidoreductase</keyword>
<keyword id="KW-0819">tRNA processing</keyword>
<evidence type="ECO:0000255" key="1">
    <source>
        <dbReference type="HAMAP-Rule" id="MF_00469"/>
    </source>
</evidence>
<evidence type="ECO:0000256" key="2">
    <source>
        <dbReference type="SAM" id="MobiDB-lite"/>
    </source>
</evidence>
<organism>
    <name type="scientific">Salmonella agona (strain SL483)</name>
    <dbReference type="NCBI Taxonomy" id="454166"/>
    <lineage>
        <taxon>Bacteria</taxon>
        <taxon>Pseudomonadati</taxon>
        <taxon>Pseudomonadota</taxon>
        <taxon>Gammaproteobacteria</taxon>
        <taxon>Enterobacterales</taxon>
        <taxon>Enterobacteriaceae</taxon>
        <taxon>Salmonella</taxon>
    </lineage>
</organism>
<comment type="function">
    <text evidence="1">Catalyzes oxygen-dependent 5-hydroxyuridine (ho5U) modification at position 34 in tRNAs.</text>
</comment>
<comment type="catalytic activity">
    <reaction evidence="1">
        <text>uridine(34) in tRNA + AH2 + O2 = 5-hydroxyuridine(34) in tRNA + A + H2O</text>
        <dbReference type="Rhea" id="RHEA:64224"/>
        <dbReference type="Rhea" id="RHEA-COMP:11727"/>
        <dbReference type="Rhea" id="RHEA-COMP:13381"/>
        <dbReference type="ChEBI" id="CHEBI:13193"/>
        <dbReference type="ChEBI" id="CHEBI:15377"/>
        <dbReference type="ChEBI" id="CHEBI:15379"/>
        <dbReference type="ChEBI" id="CHEBI:17499"/>
        <dbReference type="ChEBI" id="CHEBI:65315"/>
        <dbReference type="ChEBI" id="CHEBI:136877"/>
    </reaction>
</comment>
<comment type="similarity">
    <text evidence="1">Belongs to the TrhO family.</text>
</comment>
<sequence>MPVLHNRISNDELKAKMLAESEPRTTISFYKYFTIASPQQTRDALYQVFTALDVFGRVYLAHEGINAQISVPQSKVETFRQQLYTFDPALDGLRLNIALEDDGKSFWVLRMKVRDRIVADGIDDPSFDASNVGDYLKAADVNVMLDDPDAVFIDMRNHYEYEVGHFENALEIPADTFREQLPKAVEMLREHADKKIVMYCTGGIRCEKASAWMKHNGFNKVWHIEGGIIEYARRAREQGLPVRFIGKNFVFDERMGERISDEVIAHCHQCGAPCDSHTNCKNDGCHLLFIQCPQCASKFNGCCSEQCCEELALPEEEQRRRRAGRENGNKIFNKSRGRLNSKLSIPDPAE</sequence>
<protein>
    <recommendedName>
        <fullName evidence="1">tRNA uridine(34) hydroxylase</fullName>
        <ecNumber evidence="1">1.14.-.-</ecNumber>
    </recommendedName>
    <alternativeName>
        <fullName evidence="1">tRNA hydroxylation protein O</fullName>
    </alternativeName>
</protein>
<accession>B5F952</accession>
<dbReference type="EC" id="1.14.-.-" evidence="1"/>
<dbReference type="EMBL" id="CP001138">
    <property type="protein sequence ID" value="ACH49965.1"/>
    <property type="molecule type" value="Genomic_DNA"/>
</dbReference>
<dbReference type="RefSeq" id="WP_001144635.1">
    <property type="nucleotide sequence ID" value="NC_011149.1"/>
</dbReference>
<dbReference type="SMR" id="B5F952"/>
<dbReference type="KEGG" id="sea:SeAg_B2033"/>
<dbReference type="HOGENOM" id="CLU_038878_1_1_6"/>
<dbReference type="Proteomes" id="UP000008819">
    <property type="component" value="Chromosome"/>
</dbReference>
<dbReference type="GO" id="GO:0016705">
    <property type="term" value="F:oxidoreductase activity, acting on paired donors, with incorporation or reduction of molecular oxygen"/>
    <property type="evidence" value="ECO:0007669"/>
    <property type="project" value="UniProtKB-UniRule"/>
</dbReference>
<dbReference type="GO" id="GO:0006400">
    <property type="term" value="P:tRNA modification"/>
    <property type="evidence" value="ECO:0007669"/>
    <property type="project" value="UniProtKB-UniRule"/>
</dbReference>
<dbReference type="CDD" id="cd01518">
    <property type="entry name" value="RHOD_YceA"/>
    <property type="match status" value="1"/>
</dbReference>
<dbReference type="Gene3D" id="3.30.70.100">
    <property type="match status" value="1"/>
</dbReference>
<dbReference type="Gene3D" id="3.40.250.10">
    <property type="entry name" value="Rhodanese-like domain"/>
    <property type="match status" value="1"/>
</dbReference>
<dbReference type="HAMAP" id="MF_00469">
    <property type="entry name" value="TrhO"/>
    <property type="match status" value="1"/>
</dbReference>
<dbReference type="InterPro" id="IPR001763">
    <property type="entry name" value="Rhodanese-like_dom"/>
</dbReference>
<dbReference type="InterPro" id="IPR036873">
    <property type="entry name" value="Rhodanese-like_dom_sf"/>
</dbReference>
<dbReference type="InterPro" id="IPR022111">
    <property type="entry name" value="Rhodanese_C"/>
</dbReference>
<dbReference type="InterPro" id="IPR020936">
    <property type="entry name" value="TrhO"/>
</dbReference>
<dbReference type="InterPro" id="IPR040503">
    <property type="entry name" value="TRHO_N"/>
</dbReference>
<dbReference type="NCBIfam" id="NF001133">
    <property type="entry name" value="PRK00142.1-1"/>
    <property type="match status" value="1"/>
</dbReference>
<dbReference type="PANTHER" id="PTHR43846:SF1">
    <property type="entry name" value="TRNA URIDINE(34) HYDROXYLASE"/>
    <property type="match status" value="1"/>
</dbReference>
<dbReference type="PANTHER" id="PTHR43846">
    <property type="entry name" value="UPF0176 PROTEIN YCEA"/>
    <property type="match status" value="1"/>
</dbReference>
<dbReference type="Pfam" id="PF00581">
    <property type="entry name" value="Rhodanese"/>
    <property type="match status" value="1"/>
</dbReference>
<dbReference type="Pfam" id="PF12368">
    <property type="entry name" value="Rhodanese_C"/>
    <property type="match status" value="1"/>
</dbReference>
<dbReference type="Pfam" id="PF17773">
    <property type="entry name" value="UPF0176_N"/>
    <property type="match status" value="1"/>
</dbReference>
<dbReference type="SMART" id="SM00450">
    <property type="entry name" value="RHOD"/>
    <property type="match status" value="1"/>
</dbReference>
<dbReference type="SUPFAM" id="SSF52821">
    <property type="entry name" value="Rhodanese/Cell cycle control phosphatase"/>
    <property type="match status" value="1"/>
</dbReference>
<dbReference type="PROSITE" id="PS50206">
    <property type="entry name" value="RHODANESE_3"/>
    <property type="match status" value="1"/>
</dbReference>
<name>TRHO_SALA4</name>